<feature type="chain" id="PRO_0000341478" description="Y+L amino acid transporter 2">
    <location>
        <begin position="1"/>
        <end position="515"/>
    </location>
</feature>
<feature type="topological domain" description="Cytoplasmic" evidence="3">
    <location>
        <begin position="1"/>
        <end position="44"/>
    </location>
</feature>
<feature type="transmembrane region" description="Helical" evidence="3">
    <location>
        <begin position="45"/>
        <end position="65"/>
    </location>
</feature>
<feature type="topological domain" description="Extracellular" evidence="3">
    <location>
        <begin position="66"/>
        <end position="78"/>
    </location>
</feature>
<feature type="transmembrane region" description="Helical" evidence="3">
    <location>
        <begin position="79"/>
        <end position="99"/>
    </location>
</feature>
<feature type="topological domain" description="Cytoplasmic" evidence="3">
    <location>
        <begin position="100"/>
        <end position="114"/>
    </location>
</feature>
<feature type="transmembrane region" description="Helical" evidence="3">
    <location>
        <begin position="115"/>
        <end position="135"/>
    </location>
</feature>
<feature type="topological domain" description="Extracellular" evidence="3">
    <location>
        <begin position="136"/>
        <end position="167"/>
    </location>
</feature>
<feature type="transmembrane region" description="Helical" evidence="3">
    <location>
        <begin position="168"/>
        <end position="188"/>
    </location>
</feature>
<feature type="topological domain" description="Cytoplasmic" evidence="3">
    <location>
        <begin position="189"/>
        <end position="194"/>
    </location>
</feature>
<feature type="transmembrane region" description="Helical" evidence="3">
    <location>
        <begin position="195"/>
        <end position="215"/>
    </location>
</feature>
<feature type="topological domain" description="Extracellular" evidence="3">
    <location>
        <begin position="216"/>
        <end position="235"/>
    </location>
</feature>
<feature type="transmembrane region" description="Helical" evidence="3">
    <location>
        <begin position="236"/>
        <end position="256"/>
    </location>
</feature>
<feature type="topological domain" description="Cytoplasmic" evidence="3">
    <location>
        <begin position="257"/>
        <end position="266"/>
    </location>
</feature>
<feature type="transmembrane region" description="Helical" evidence="3">
    <location>
        <begin position="267"/>
        <end position="287"/>
    </location>
</feature>
<feature type="topological domain" description="Extracellular" evidence="3">
    <location>
        <begin position="288"/>
        <end position="311"/>
    </location>
</feature>
<feature type="transmembrane region" description="Helical" evidence="3">
    <location>
        <begin position="312"/>
        <end position="332"/>
    </location>
</feature>
<feature type="topological domain" description="Cytoplasmic" evidence="3">
    <location>
        <begin position="333"/>
        <end position="363"/>
    </location>
</feature>
<feature type="transmembrane region" description="Helical" evidence="3">
    <location>
        <begin position="364"/>
        <end position="384"/>
    </location>
</feature>
<feature type="topological domain" description="Extracellular" evidence="3">
    <location>
        <position position="385"/>
    </location>
</feature>
<feature type="transmembrane region" description="Helical" evidence="3">
    <location>
        <begin position="386"/>
        <end position="406"/>
    </location>
</feature>
<feature type="topological domain" description="Cytoplasmic" evidence="3">
    <location>
        <begin position="407"/>
        <end position="424"/>
    </location>
</feature>
<feature type="transmembrane region" description="Helical" evidence="3">
    <location>
        <begin position="425"/>
        <end position="445"/>
    </location>
</feature>
<feature type="topological domain" description="Extracellular" evidence="3">
    <location>
        <begin position="446"/>
        <end position="451"/>
    </location>
</feature>
<feature type="transmembrane region" description="Helical" evidence="3">
    <location>
        <begin position="452"/>
        <end position="472"/>
    </location>
</feature>
<feature type="topological domain" description="Cytoplasmic" evidence="3">
    <location>
        <begin position="473"/>
        <end position="515"/>
    </location>
</feature>
<feature type="modified residue" description="Phosphoserine" evidence="20">
    <location>
        <position position="30"/>
    </location>
</feature>
<feature type="splice variant" id="VSP_052833" description="In isoform 2." evidence="9">
    <location>
        <begin position="1"/>
        <end position="164"/>
    </location>
</feature>
<feature type="splice variant" id="VSP_052834" description="In isoform 2." evidence="9">
    <original>ACRLLAAACVCLLTFVNCAYVKWGTRVQDTFTYAKVLALIAIIIMGLVKLCQ</original>
    <variation>MFFFLPLPCFLSLFFFLLLFHLFNSPSVFFLFFTFLLSPFSFAWSPTRLCPT</variation>
    <location>
        <begin position="165"/>
        <end position="216"/>
    </location>
</feature>
<feature type="sequence conflict" description="In Ref. 2; BAE33971." evidence="10" ref="2">
    <original>W</original>
    <variation>R</variation>
    <location>
        <position position="129"/>
    </location>
</feature>
<feature type="sequence conflict" description="In Ref. 2; BAE38304." evidence="10" ref="2">
    <original>L</original>
    <variation>P</variation>
    <location>
        <position position="132"/>
    </location>
</feature>
<organism>
    <name type="scientific">Mus musculus</name>
    <name type="common">Mouse</name>
    <dbReference type="NCBI Taxonomy" id="10090"/>
    <lineage>
        <taxon>Eukaryota</taxon>
        <taxon>Metazoa</taxon>
        <taxon>Chordata</taxon>
        <taxon>Craniata</taxon>
        <taxon>Vertebrata</taxon>
        <taxon>Euteleostomi</taxon>
        <taxon>Mammalia</taxon>
        <taxon>Eutheria</taxon>
        <taxon>Euarchontoglires</taxon>
        <taxon>Glires</taxon>
        <taxon>Rodentia</taxon>
        <taxon>Myomorpha</taxon>
        <taxon>Muroidea</taxon>
        <taxon>Muridae</taxon>
        <taxon>Murinae</taxon>
        <taxon>Mus</taxon>
        <taxon>Mus</taxon>
    </lineage>
</organism>
<dbReference type="EMBL" id="AK129099">
    <property type="protein sequence ID" value="BAC97909.1"/>
    <property type="status" value="ALT_INIT"/>
    <property type="molecule type" value="mRNA"/>
</dbReference>
<dbReference type="EMBL" id="AK049478">
    <property type="protein sequence ID" value="BAC33770.1"/>
    <property type="molecule type" value="mRNA"/>
</dbReference>
<dbReference type="EMBL" id="AK053899">
    <property type="protein sequence ID" value="BAC35581.1"/>
    <property type="molecule type" value="mRNA"/>
</dbReference>
<dbReference type="EMBL" id="AK157127">
    <property type="protein sequence ID" value="BAE33971.1"/>
    <property type="molecule type" value="mRNA"/>
</dbReference>
<dbReference type="EMBL" id="AK164666">
    <property type="protein sequence ID" value="BAE37866.1"/>
    <property type="molecule type" value="mRNA"/>
</dbReference>
<dbReference type="EMBL" id="AK165629">
    <property type="protein sequence ID" value="BAE38304.1"/>
    <property type="molecule type" value="mRNA"/>
</dbReference>
<dbReference type="EMBL" id="AK165979">
    <property type="protein sequence ID" value="BAE38497.1"/>
    <property type="molecule type" value="mRNA"/>
</dbReference>
<dbReference type="EMBL" id="BC038404">
    <property type="protein sequence ID" value="AAH38404.1"/>
    <property type="status" value="ALT_FRAME"/>
    <property type="molecule type" value="mRNA"/>
</dbReference>
<dbReference type="CCDS" id="CCDS22631.1">
    <molecule id="Q8BGK6-1"/>
</dbReference>
<dbReference type="RefSeq" id="NP_001344310.1">
    <molecule id="Q8BGK6-1"/>
    <property type="nucleotide sequence ID" value="NM_001357381.1"/>
</dbReference>
<dbReference type="RefSeq" id="NP_848913.1">
    <molecule id="Q8BGK6-1"/>
    <property type="nucleotide sequence ID" value="NM_178798.4"/>
</dbReference>
<dbReference type="RefSeq" id="XP_006531200.1">
    <property type="nucleotide sequence ID" value="XM_006531137.3"/>
</dbReference>
<dbReference type="RefSeq" id="XP_006531201.1">
    <molecule id="Q8BGK6-1"/>
    <property type="nucleotide sequence ID" value="XM_006531138.5"/>
</dbReference>
<dbReference type="RefSeq" id="XP_017168357.1">
    <molecule id="Q8BGK6-1"/>
    <property type="nucleotide sequence ID" value="XM_017312868.3"/>
</dbReference>
<dbReference type="RefSeq" id="XP_030099494.1">
    <molecule id="Q8BGK6-1"/>
    <property type="nucleotide sequence ID" value="XM_030243634.2"/>
</dbReference>
<dbReference type="RefSeq" id="XP_030099495.1">
    <molecule id="Q8BGK6-1"/>
    <property type="nucleotide sequence ID" value="XM_030243635.2"/>
</dbReference>
<dbReference type="RefSeq" id="XP_036010031.1">
    <molecule id="Q8BGK6-1"/>
    <property type="nucleotide sequence ID" value="XM_036154138.1"/>
</dbReference>
<dbReference type="SMR" id="Q8BGK6"/>
<dbReference type="BioGRID" id="237036">
    <property type="interactions" value="2"/>
</dbReference>
<dbReference type="FunCoup" id="Q8BGK6">
    <property type="interactions" value="859"/>
</dbReference>
<dbReference type="STRING" id="10090.ENSMUSP00000034378"/>
<dbReference type="iPTMnet" id="Q8BGK6"/>
<dbReference type="PhosphoSitePlus" id="Q8BGK6"/>
<dbReference type="SwissPalm" id="Q8BGK6"/>
<dbReference type="PaxDb" id="10090-ENSMUSP00000034378"/>
<dbReference type="PeptideAtlas" id="Q8BGK6"/>
<dbReference type="ProteomicsDB" id="275118">
    <molecule id="Q8BGK6-1"/>
</dbReference>
<dbReference type="ProteomicsDB" id="275119">
    <molecule id="Q8BGK6-2"/>
</dbReference>
<dbReference type="Pumba" id="Q8BGK6"/>
<dbReference type="Antibodypedia" id="55124">
    <property type="antibodies" value="112 antibodies from 18 providers"/>
</dbReference>
<dbReference type="DNASU" id="330836"/>
<dbReference type="Ensembl" id="ENSMUST00000034378.5">
    <molecule id="Q8BGK6-1"/>
    <property type="protein sequence ID" value="ENSMUSP00000034378.4"/>
    <property type="gene ID" value="ENSMUSG00000031904.6"/>
</dbReference>
<dbReference type="GeneID" id="330836"/>
<dbReference type="KEGG" id="mmu:330836"/>
<dbReference type="UCSC" id="uc009nfl.1">
    <molecule id="Q8BGK6-1"/>
    <property type="organism name" value="mouse"/>
</dbReference>
<dbReference type="UCSC" id="uc009nfo.1">
    <molecule id="Q8BGK6-2"/>
    <property type="organism name" value="mouse"/>
</dbReference>
<dbReference type="AGR" id="MGI:2142598"/>
<dbReference type="CTD" id="9057"/>
<dbReference type="MGI" id="MGI:2142598">
    <property type="gene designation" value="Slc7a6"/>
</dbReference>
<dbReference type="VEuPathDB" id="HostDB:ENSMUSG00000031904"/>
<dbReference type="eggNOG" id="KOG1287">
    <property type="taxonomic scope" value="Eukaryota"/>
</dbReference>
<dbReference type="GeneTree" id="ENSGT00940000158295"/>
<dbReference type="HOGENOM" id="CLU_007946_3_0_1"/>
<dbReference type="InParanoid" id="Q8BGK6"/>
<dbReference type="OMA" id="ISGMYFG"/>
<dbReference type="OrthoDB" id="10062876at2759"/>
<dbReference type="PhylomeDB" id="Q8BGK6"/>
<dbReference type="TreeFam" id="TF313355"/>
<dbReference type="Reactome" id="R-MMU-210991">
    <property type="pathway name" value="Basigin interactions"/>
</dbReference>
<dbReference type="Reactome" id="R-MMU-352230">
    <property type="pathway name" value="Amino acid transport across the plasma membrane"/>
</dbReference>
<dbReference type="BioGRID-ORCS" id="330836">
    <property type="hits" value="25 hits in 75 CRISPR screens"/>
</dbReference>
<dbReference type="ChiTaRS" id="Slc7a6">
    <property type="organism name" value="mouse"/>
</dbReference>
<dbReference type="PRO" id="PR:Q8BGK6"/>
<dbReference type="Proteomes" id="UP000000589">
    <property type="component" value="Chromosome 8"/>
</dbReference>
<dbReference type="RNAct" id="Q8BGK6">
    <property type="molecule type" value="protein"/>
</dbReference>
<dbReference type="Bgee" id="ENSMUSG00000031904">
    <property type="expression patterns" value="Expressed in spermatocyte and 246 other cell types or tissues"/>
</dbReference>
<dbReference type="ExpressionAtlas" id="Q8BGK6">
    <property type="expression patterns" value="baseline and differential"/>
</dbReference>
<dbReference type="GO" id="GO:0005886">
    <property type="term" value="C:plasma membrane"/>
    <property type="evidence" value="ECO:0007669"/>
    <property type="project" value="UniProtKB-SubCell"/>
</dbReference>
<dbReference type="GO" id="GO:0034618">
    <property type="term" value="F:arginine binding"/>
    <property type="evidence" value="ECO:0000250"/>
    <property type="project" value="UniProtKB"/>
</dbReference>
<dbReference type="GO" id="GO:0061459">
    <property type="term" value="F:L-arginine transmembrane transporter activity"/>
    <property type="evidence" value="ECO:0000250"/>
    <property type="project" value="UniProtKB"/>
</dbReference>
<dbReference type="GO" id="GO:0106439">
    <property type="term" value="F:L-lysine:L-arginine antiporter activity"/>
    <property type="evidence" value="ECO:0000250"/>
    <property type="project" value="UniProtKB"/>
</dbReference>
<dbReference type="GO" id="GO:0031460">
    <property type="term" value="P:glycine betaine transport"/>
    <property type="evidence" value="ECO:0000314"/>
    <property type="project" value="UniProtKB"/>
</dbReference>
<dbReference type="GO" id="GO:1903826">
    <property type="term" value="P:L-arginine transmembrane transport"/>
    <property type="evidence" value="ECO:0000250"/>
    <property type="project" value="UniProtKB"/>
</dbReference>
<dbReference type="GO" id="GO:0015820">
    <property type="term" value="P:L-leucine transport"/>
    <property type="evidence" value="ECO:0007669"/>
    <property type="project" value="Ensembl"/>
</dbReference>
<dbReference type="GO" id="GO:0015804">
    <property type="term" value="P:neutral amino acid transport"/>
    <property type="evidence" value="ECO:0000250"/>
    <property type="project" value="UniProtKB"/>
</dbReference>
<dbReference type="GO" id="GO:0006809">
    <property type="term" value="P:nitric oxide biosynthetic process"/>
    <property type="evidence" value="ECO:0000250"/>
    <property type="project" value="UniProtKB"/>
</dbReference>
<dbReference type="GO" id="GO:0015822">
    <property type="term" value="P:ornithine transport"/>
    <property type="evidence" value="ECO:0007669"/>
    <property type="project" value="Ensembl"/>
</dbReference>
<dbReference type="FunFam" id="1.20.1740.10:FF:000003">
    <property type="entry name" value="Y+L amino acid transporter 1 isoform X1"/>
    <property type="match status" value="1"/>
</dbReference>
<dbReference type="Gene3D" id="1.20.1740.10">
    <property type="entry name" value="Amino acid/polyamine transporter I"/>
    <property type="match status" value="1"/>
</dbReference>
<dbReference type="InterPro" id="IPR002293">
    <property type="entry name" value="AA/rel_permease1"/>
</dbReference>
<dbReference type="InterPro" id="IPR050598">
    <property type="entry name" value="AminoAcid_Transporter"/>
</dbReference>
<dbReference type="PANTHER" id="PTHR11785">
    <property type="entry name" value="AMINO ACID TRANSPORTER"/>
    <property type="match status" value="1"/>
</dbReference>
<dbReference type="PANTHER" id="PTHR11785:SF398">
    <property type="entry name" value="Y+L AMINO ACID TRANSPORTER 2"/>
    <property type="match status" value="1"/>
</dbReference>
<dbReference type="Pfam" id="PF13520">
    <property type="entry name" value="AA_permease_2"/>
    <property type="match status" value="1"/>
</dbReference>
<dbReference type="PIRSF" id="PIRSF006060">
    <property type="entry name" value="AA_transporter"/>
    <property type="match status" value="1"/>
</dbReference>
<sequence>MEAQELGSPTPTYHLLPKANQHTVKEDAGSPSQGSPETMQLKKEISLLNGVSLVVGNMIGSGIFVSPKGVLKYTASYGLSLIVWAIGGLFSVVGALCYAELGTTITKSGASYAYILEAFGGFIAFIRLWVSLLIVEPTSQAIIAITFANYIIKPSFPTCDPPYVACRLLAAACVCLLTFVNCAYVKWGTRVQDTFTYAKVLALIAIIIMGLVKLCQGHTEHFQDAFKGSSWNVGDLSLALYSALFSYSGWDTLNFVTEEIKNPERNLPLAIGISMPIVTLIYILTNVAYYTVLNIQDVHKSDAVAVTFADQTFGMFSWTIPIAVALSCFGGLNASIFASSRLFFVGSREGHLPNLLSMIHIERFTPVPALLFNCTMTLIYLVVKDVFLLINYFSFSYWFFVGLSVVGQLYLRWKEPDWPRPLKLSLFFPIVFCVCSLFLVAVPLFSDTINSLIGIGIALSGVPVYFLGVYLPESRRPLFIRNVLATVTRVTQKLCFCVLTELDVTEEKNVERKTD</sequence>
<protein>
    <recommendedName>
        <fullName evidence="10">Y+L amino acid transporter 2</fullName>
    </recommendedName>
    <alternativeName>
        <fullName>Solute carrier family 7 member 6</fullName>
    </alternativeName>
    <alternativeName>
        <fullName>y(+)L-type amino acid transporter 2</fullName>
        <shortName>Y+LAT2</shortName>
        <shortName>y+LAT-2</shortName>
    </alternativeName>
</protein>
<proteinExistence type="evidence at protein level"/>
<comment type="function">
    <text evidence="1 2 8">Heterodimer with SLC3A2, that functions as an antiporter which operates as an efflux route by exporting cationic amino acids such as L-arginine from inside the cells in exchange with neutral amino acids like L-leucine, L-glutamine and isoleucine, plus sodium ions and may participate in nitric oxide synthesis (By similarity). Also exchanges L-arginine with L-lysine in a sodium-independent manner (By similarity). The transport mechanism is electroneutral and operates with a stoichiometry of 1:1 (By similarity). Contributes to ammonia-induced increase of L-arginine uptake in cerebral cortical astrocytes leading to ammonia-dependent increase of nitric oxide (NO) production via inducible nitric oxide synthase (iNOS) induction, and protein nitration (By similarity). May mediate transport of ornithine in retinal pigment epithelial (RPE) cells (By similarity). May also transport glycine betaine in a sodium dependent manner from the cumulus granulosa into the enclosed oocyte (PubMed:24599290).</text>
</comment>
<comment type="catalytic activity">
    <reaction evidence="2">
        <text>L-lysine(out) + L-arginine(in) = L-lysine(in) + L-arginine(out)</text>
        <dbReference type="Rhea" id="RHEA:70827"/>
        <dbReference type="ChEBI" id="CHEBI:32551"/>
        <dbReference type="ChEBI" id="CHEBI:32682"/>
    </reaction>
</comment>
<comment type="catalytic activity">
    <reaction evidence="2">
        <text>L-leucine(out) + L-arginine(in) + Na(+)(out) = L-leucine(in) + L-arginine(out) + Na(+)(in)</text>
        <dbReference type="Rhea" id="RHEA:70831"/>
        <dbReference type="ChEBI" id="CHEBI:29101"/>
        <dbReference type="ChEBI" id="CHEBI:32682"/>
        <dbReference type="ChEBI" id="CHEBI:57427"/>
    </reaction>
</comment>
<comment type="catalytic activity">
    <reaction evidence="2">
        <text>L-glutamine(out) + L-arginine(in) + Na(+)(out) = L-glutamine(in) + L-arginine(out) + Na(+)(in)</text>
        <dbReference type="Rhea" id="RHEA:70835"/>
        <dbReference type="ChEBI" id="CHEBI:29101"/>
        <dbReference type="ChEBI" id="CHEBI:32682"/>
        <dbReference type="ChEBI" id="CHEBI:58359"/>
    </reaction>
</comment>
<comment type="catalytic activity">
    <reaction evidence="2">
        <text>L-histidine(out) + L-arginine(in) + Na(+)(out) = L-histidine(in) + L-arginine(out) + Na(+)(in)</text>
        <dbReference type="Rhea" id="RHEA:70839"/>
        <dbReference type="ChEBI" id="CHEBI:29101"/>
        <dbReference type="ChEBI" id="CHEBI:32682"/>
        <dbReference type="ChEBI" id="CHEBI:57595"/>
    </reaction>
</comment>
<comment type="catalytic activity">
    <reaction evidence="2">
        <text>L-cysteine(out) + L-arginine(in) + Na(+)(out) = L-cysteine(in) + L-arginine(out) + Na(+)(in)</text>
        <dbReference type="Rhea" id="RHEA:70847"/>
        <dbReference type="ChEBI" id="CHEBI:29101"/>
        <dbReference type="ChEBI" id="CHEBI:32682"/>
        <dbReference type="ChEBI" id="CHEBI:35235"/>
    </reaction>
</comment>
<comment type="catalytic activity">
    <reaction evidence="2">
        <text>L-arginine(in) + L-methionine(out) + Na(+)(out) = L-arginine(out) + L-methionine(in) + Na(+)(in)</text>
        <dbReference type="Rhea" id="RHEA:70843"/>
        <dbReference type="ChEBI" id="CHEBI:29101"/>
        <dbReference type="ChEBI" id="CHEBI:32682"/>
        <dbReference type="ChEBI" id="CHEBI:57844"/>
    </reaction>
</comment>
<comment type="subunit">
    <text evidence="2">Disulfide-linked heterodimer with the amino acid transport protein SLC3A2/4F2hc.</text>
</comment>
<comment type="subcellular location">
    <subcellularLocation>
        <location evidence="2">Cell membrane</location>
        <topology evidence="3">Multi-pass membrane protein</topology>
    </subcellularLocation>
</comment>
<comment type="alternative products">
    <event type="alternative splicing"/>
    <isoform>
        <id>Q8BGK6-1</id>
        <name evidence="6 7">1</name>
        <sequence type="displayed"/>
    </isoform>
    <isoform>
        <id>Q8BGK6-2</id>
        <name evidence="5">2</name>
        <sequence type="described" ref="VSP_052833 VSP_052834"/>
    </isoform>
</comment>
<comment type="tissue specificity">
    <text evidence="4">Strongest expression in brain but also detected in testis, parotis, small intestine, heart and kidney. Weakly expressed in spleen, lung and liver.</text>
</comment>
<comment type="similarity">
    <text evidence="3">Belongs to the amino acid-polyamine-organocation (APC) superfamily. L-type amino acid transporter (LAT) (TC 2.A.3.8) family.</text>
</comment>
<comment type="sequence caution" evidence="10">
    <conflict type="frameshift">
        <sequence resource="EMBL-CDS" id="AAH38404"/>
    </conflict>
</comment>
<comment type="sequence caution" evidence="10">
    <conflict type="erroneous initiation">
        <sequence resource="EMBL-CDS" id="BAC97909"/>
    </conflict>
    <text>Extended N-terminus.</text>
</comment>
<keyword id="KW-0025">Alternative splicing</keyword>
<keyword id="KW-0029">Amino-acid transport</keyword>
<keyword id="KW-0050">Antiport</keyword>
<keyword id="KW-1003">Cell membrane</keyword>
<keyword id="KW-1015">Disulfide bond</keyword>
<keyword id="KW-0472">Membrane</keyword>
<keyword id="KW-0597">Phosphoprotein</keyword>
<keyword id="KW-1185">Reference proteome</keyword>
<keyword id="KW-0812">Transmembrane</keyword>
<keyword id="KW-1133">Transmembrane helix</keyword>
<keyword id="KW-0813">Transport</keyword>
<gene>
    <name evidence="19" type="primary">Slc7a6</name>
    <name evidence="14" type="synonym">Kiaa0245</name>
</gene>
<evidence type="ECO:0000250" key="1">
    <source>
        <dbReference type="UniProtKB" id="D3ZMM8"/>
    </source>
</evidence>
<evidence type="ECO:0000250" key="2">
    <source>
        <dbReference type="UniProtKB" id="Q92536"/>
    </source>
</evidence>
<evidence type="ECO:0000255" key="3"/>
<evidence type="ECO:0000269" key="4">
    <source>
    </source>
</evidence>
<evidence type="ECO:0000269" key="5">
    <source>
    </source>
</evidence>
<evidence type="ECO:0000269" key="6">
    <source>
    </source>
</evidence>
<evidence type="ECO:0000269" key="7">
    <source>
    </source>
</evidence>
<evidence type="ECO:0000269" key="8">
    <source>
    </source>
</evidence>
<evidence type="ECO:0000303" key="9">
    <source>
    </source>
</evidence>
<evidence type="ECO:0000305" key="10"/>
<evidence type="ECO:0000312" key="11">
    <source>
        <dbReference type="EMBL" id="AAH38404.1"/>
    </source>
</evidence>
<evidence type="ECO:0000312" key="12">
    <source>
        <dbReference type="EMBL" id="BAC33770.1"/>
    </source>
</evidence>
<evidence type="ECO:0000312" key="13">
    <source>
        <dbReference type="EMBL" id="BAC35581.1"/>
    </source>
</evidence>
<evidence type="ECO:0000312" key="14">
    <source>
        <dbReference type="EMBL" id="BAC97909.1"/>
    </source>
</evidence>
<evidence type="ECO:0000312" key="15">
    <source>
        <dbReference type="EMBL" id="BAE33971.1"/>
    </source>
</evidence>
<evidence type="ECO:0000312" key="16">
    <source>
        <dbReference type="EMBL" id="BAE37866.1"/>
    </source>
</evidence>
<evidence type="ECO:0000312" key="17">
    <source>
        <dbReference type="EMBL" id="BAE38304.1"/>
    </source>
</evidence>
<evidence type="ECO:0000312" key="18">
    <source>
        <dbReference type="EMBL" id="BAE38497.1"/>
    </source>
</evidence>
<evidence type="ECO:0000312" key="19">
    <source>
        <dbReference type="MGI" id="MGI:2142598"/>
    </source>
</evidence>
<evidence type="ECO:0007744" key="20">
    <source>
    </source>
</evidence>
<accession>Q8BGK6</accession>
<accession>Q3TMY5</accession>
<accession>Q3U084</accession>
<accession>Q6ZQF5</accession>
<accession>Q8CFY3</accession>
<name>YLAT2_MOUSE</name>
<reference evidence="10 14" key="1">
    <citation type="journal article" date="2003" name="DNA Res.">
        <title>Prediction of the coding sequences of mouse homologues of KIAA gene: III. The complete nucleotide sequences of 500 mouse KIAA-homologous cDNAs identified by screening of terminal sequences of cDNA clones randomly sampled from size-fractionated libraries.</title>
        <authorList>
            <person name="Okazaki N."/>
            <person name="Kikuno R."/>
            <person name="Ohara R."/>
            <person name="Inamoto S."/>
            <person name="Koseki H."/>
            <person name="Hiraoka S."/>
            <person name="Saga Y."/>
            <person name="Nagase T."/>
            <person name="Ohara O."/>
            <person name="Koga H."/>
        </authorList>
    </citation>
    <scope>NUCLEOTIDE SEQUENCE [LARGE SCALE MRNA] (ISOFORM 2)</scope>
    <source>
        <tissue evidence="14">Embryonic tail</tissue>
    </source>
</reference>
<reference evidence="10 12" key="2">
    <citation type="journal article" date="2005" name="Science">
        <title>The transcriptional landscape of the mammalian genome.</title>
        <authorList>
            <person name="Carninci P."/>
            <person name="Kasukawa T."/>
            <person name="Katayama S."/>
            <person name="Gough J."/>
            <person name="Frith M.C."/>
            <person name="Maeda N."/>
            <person name="Oyama R."/>
            <person name="Ravasi T."/>
            <person name="Lenhard B."/>
            <person name="Wells C."/>
            <person name="Kodzius R."/>
            <person name="Shimokawa K."/>
            <person name="Bajic V.B."/>
            <person name="Brenner S.E."/>
            <person name="Batalov S."/>
            <person name="Forrest A.R."/>
            <person name="Zavolan M."/>
            <person name="Davis M.J."/>
            <person name="Wilming L.G."/>
            <person name="Aidinis V."/>
            <person name="Allen J.E."/>
            <person name="Ambesi-Impiombato A."/>
            <person name="Apweiler R."/>
            <person name="Aturaliya R.N."/>
            <person name="Bailey T.L."/>
            <person name="Bansal M."/>
            <person name="Baxter L."/>
            <person name="Beisel K.W."/>
            <person name="Bersano T."/>
            <person name="Bono H."/>
            <person name="Chalk A.M."/>
            <person name="Chiu K.P."/>
            <person name="Choudhary V."/>
            <person name="Christoffels A."/>
            <person name="Clutterbuck D.R."/>
            <person name="Crowe M.L."/>
            <person name="Dalla E."/>
            <person name="Dalrymple B.P."/>
            <person name="de Bono B."/>
            <person name="Della Gatta G."/>
            <person name="di Bernardo D."/>
            <person name="Down T."/>
            <person name="Engstrom P."/>
            <person name="Fagiolini M."/>
            <person name="Faulkner G."/>
            <person name="Fletcher C.F."/>
            <person name="Fukushima T."/>
            <person name="Furuno M."/>
            <person name="Futaki S."/>
            <person name="Gariboldi M."/>
            <person name="Georgii-Hemming P."/>
            <person name="Gingeras T.R."/>
            <person name="Gojobori T."/>
            <person name="Green R.E."/>
            <person name="Gustincich S."/>
            <person name="Harbers M."/>
            <person name="Hayashi Y."/>
            <person name="Hensch T.K."/>
            <person name="Hirokawa N."/>
            <person name="Hill D."/>
            <person name="Huminiecki L."/>
            <person name="Iacono M."/>
            <person name="Ikeo K."/>
            <person name="Iwama A."/>
            <person name="Ishikawa T."/>
            <person name="Jakt M."/>
            <person name="Kanapin A."/>
            <person name="Katoh M."/>
            <person name="Kawasawa Y."/>
            <person name="Kelso J."/>
            <person name="Kitamura H."/>
            <person name="Kitano H."/>
            <person name="Kollias G."/>
            <person name="Krishnan S.P."/>
            <person name="Kruger A."/>
            <person name="Kummerfeld S.K."/>
            <person name="Kurochkin I.V."/>
            <person name="Lareau L.F."/>
            <person name="Lazarevic D."/>
            <person name="Lipovich L."/>
            <person name="Liu J."/>
            <person name="Liuni S."/>
            <person name="McWilliam S."/>
            <person name="Madan Babu M."/>
            <person name="Madera M."/>
            <person name="Marchionni L."/>
            <person name="Matsuda H."/>
            <person name="Matsuzawa S."/>
            <person name="Miki H."/>
            <person name="Mignone F."/>
            <person name="Miyake S."/>
            <person name="Morris K."/>
            <person name="Mottagui-Tabar S."/>
            <person name="Mulder N."/>
            <person name="Nakano N."/>
            <person name="Nakauchi H."/>
            <person name="Ng P."/>
            <person name="Nilsson R."/>
            <person name="Nishiguchi S."/>
            <person name="Nishikawa S."/>
            <person name="Nori F."/>
            <person name="Ohara O."/>
            <person name="Okazaki Y."/>
            <person name="Orlando V."/>
            <person name="Pang K.C."/>
            <person name="Pavan W.J."/>
            <person name="Pavesi G."/>
            <person name="Pesole G."/>
            <person name="Petrovsky N."/>
            <person name="Piazza S."/>
            <person name="Reed J."/>
            <person name="Reid J.F."/>
            <person name="Ring B.Z."/>
            <person name="Ringwald M."/>
            <person name="Rost B."/>
            <person name="Ruan Y."/>
            <person name="Salzberg S.L."/>
            <person name="Sandelin A."/>
            <person name="Schneider C."/>
            <person name="Schoenbach C."/>
            <person name="Sekiguchi K."/>
            <person name="Semple C.A."/>
            <person name="Seno S."/>
            <person name="Sessa L."/>
            <person name="Sheng Y."/>
            <person name="Shibata Y."/>
            <person name="Shimada H."/>
            <person name="Shimada K."/>
            <person name="Silva D."/>
            <person name="Sinclair B."/>
            <person name="Sperling S."/>
            <person name="Stupka E."/>
            <person name="Sugiura K."/>
            <person name="Sultana R."/>
            <person name="Takenaka Y."/>
            <person name="Taki K."/>
            <person name="Tammoja K."/>
            <person name="Tan S.L."/>
            <person name="Tang S."/>
            <person name="Taylor M.S."/>
            <person name="Tegner J."/>
            <person name="Teichmann S.A."/>
            <person name="Ueda H.R."/>
            <person name="van Nimwegen E."/>
            <person name="Verardo R."/>
            <person name="Wei C.L."/>
            <person name="Yagi K."/>
            <person name="Yamanishi H."/>
            <person name="Zabarovsky E."/>
            <person name="Zhu S."/>
            <person name="Zimmer A."/>
            <person name="Hide W."/>
            <person name="Bult C."/>
            <person name="Grimmond S.M."/>
            <person name="Teasdale R.D."/>
            <person name="Liu E.T."/>
            <person name="Brusic V."/>
            <person name="Quackenbush J."/>
            <person name="Wahlestedt C."/>
            <person name="Mattick J.S."/>
            <person name="Hume D.A."/>
            <person name="Kai C."/>
            <person name="Sasaki D."/>
            <person name="Tomaru Y."/>
            <person name="Fukuda S."/>
            <person name="Kanamori-Katayama M."/>
            <person name="Suzuki M."/>
            <person name="Aoki J."/>
            <person name="Arakawa T."/>
            <person name="Iida J."/>
            <person name="Imamura K."/>
            <person name="Itoh M."/>
            <person name="Kato T."/>
            <person name="Kawaji H."/>
            <person name="Kawagashira N."/>
            <person name="Kawashima T."/>
            <person name="Kojima M."/>
            <person name="Kondo S."/>
            <person name="Konno H."/>
            <person name="Nakano K."/>
            <person name="Ninomiya N."/>
            <person name="Nishio T."/>
            <person name="Okada M."/>
            <person name="Plessy C."/>
            <person name="Shibata K."/>
            <person name="Shiraki T."/>
            <person name="Suzuki S."/>
            <person name="Tagami M."/>
            <person name="Waki K."/>
            <person name="Watahiki A."/>
            <person name="Okamura-Oho Y."/>
            <person name="Suzuki H."/>
            <person name="Kawai J."/>
            <person name="Hayashizaki Y."/>
        </authorList>
    </citation>
    <scope>NUCLEOTIDE SEQUENCE [LARGE SCALE MRNA] (ISOFORM 1)</scope>
    <source>
        <strain evidence="12">C57BL/6J</strain>
        <strain evidence="15">NOD</strain>
        <tissue evidence="12">Embryo</tissue>
        <tissue evidence="17">Embryonic stem cell</tissue>
        <tissue evidence="16">Embryonic stomach</tissue>
        <tissue evidence="13">Eye</tissue>
        <tissue evidence="18">Lung</tissue>
        <tissue evidence="15">Spleen</tissue>
    </source>
</reference>
<reference evidence="10 11" key="3">
    <citation type="journal article" date="2004" name="Genome Res.">
        <title>The status, quality, and expansion of the NIH full-length cDNA project: the Mammalian Gene Collection (MGC).</title>
        <authorList>
            <consortium name="The MGC Project Team"/>
        </authorList>
    </citation>
    <scope>NUCLEOTIDE SEQUENCE [LARGE SCALE MRNA] (ISOFORM 1)</scope>
    <source>
        <strain evidence="11">FVB/N</strain>
        <tissue evidence="11">Mammary tumor</tissue>
    </source>
</reference>
<reference evidence="10" key="4">
    <citation type="journal article" date="2000" name="Biochem. J.">
        <title>The heterodimeric amino acid transporter 4F2hc/y+LAT2 mediates arginine efflux in exchange with glutamine.</title>
        <authorList>
            <person name="Broeer A."/>
            <person name="Wagner C.A."/>
            <person name="Lang F."/>
            <person name="Broeer S."/>
        </authorList>
    </citation>
    <scope>NUCLEOTIDE SEQUENCE [MRNA] OF 140-293 (ISOFORM 1)</scope>
    <scope>TISSUE SPECIFICITY</scope>
</reference>
<reference key="5">
    <citation type="journal article" date="2009" name="Immunity">
        <title>The phagosomal proteome in interferon-gamma-activated macrophages.</title>
        <authorList>
            <person name="Trost M."/>
            <person name="English L."/>
            <person name="Lemieux S."/>
            <person name="Courcelles M."/>
            <person name="Desjardins M."/>
            <person name="Thibault P."/>
        </authorList>
    </citation>
    <scope>PHOSPHORYLATION [LARGE SCALE ANALYSIS] AT SER-30</scope>
    <scope>IDENTIFICATION BY MASS SPECTROMETRY [LARGE SCALE ANALYSIS]</scope>
</reference>
<reference key="6">
    <citation type="journal article" date="2014" name="Biol. Reprod.">
        <title>Uptake of betaine into mouse cumulus-oocyte complexes via the SLC7A6 isoform of y+L transporter.</title>
        <authorList>
            <person name="Corbett H.E."/>
            <person name="Dube C.D."/>
            <person name="Slow S."/>
            <person name="Lever M."/>
            <person name="Trasler J.M."/>
            <person name="Baltz J.M."/>
        </authorList>
    </citation>
    <scope>FUNCTION</scope>
</reference>